<proteinExistence type="inferred from homology"/>
<sequence>MSGGLKAEAASFALPGATLVDRVDLTITQGELVAIVGPNGAGKSTLLRMLSGDLRPTSGTVSLDGRALADYPPRALAARRAMLAQHTTVSFPFSVEEIVAMGADIDPRKAAPLFDAALRDVGLDHFRHRDITTLSGGEQQRAHFARILVQLWSGEADAGPGLLLLDEPTSSLDIRHQLDLAETARRCARRGTTVIAILHDLNLAARFADRIIVLSGGRIAADGAPAAVLRHELIADVFDVALTVNTDVAGQPFVLPELADDRRAAAHA</sequence>
<evidence type="ECO:0000255" key="1">
    <source>
        <dbReference type="HAMAP-Rule" id="MF_01718"/>
    </source>
</evidence>
<organism>
    <name type="scientific">Rhodopseudomonas palustris (strain ATCC BAA-98 / CGA009)</name>
    <dbReference type="NCBI Taxonomy" id="258594"/>
    <lineage>
        <taxon>Bacteria</taxon>
        <taxon>Pseudomonadati</taxon>
        <taxon>Pseudomonadota</taxon>
        <taxon>Alphaproteobacteria</taxon>
        <taxon>Hyphomicrobiales</taxon>
        <taxon>Nitrobacteraceae</taxon>
        <taxon>Rhodopseudomonas</taxon>
    </lineage>
</organism>
<gene>
    <name evidence="1" type="primary">hmuV</name>
    <name type="ordered locus">RPA2118</name>
</gene>
<feature type="chain" id="PRO_0000269621" description="Hemin import ATP-binding protein HmuV">
    <location>
        <begin position="1"/>
        <end position="268"/>
    </location>
</feature>
<feature type="domain" description="ABC transporter" evidence="1">
    <location>
        <begin position="5"/>
        <end position="241"/>
    </location>
</feature>
<feature type="binding site" evidence="1">
    <location>
        <begin position="37"/>
        <end position="44"/>
    </location>
    <ligand>
        <name>ATP</name>
        <dbReference type="ChEBI" id="CHEBI:30616"/>
    </ligand>
</feature>
<dbReference type="EC" id="7.6.2.-" evidence="1"/>
<dbReference type="EMBL" id="BX572599">
    <property type="protein sequence ID" value="CAE27559.1"/>
    <property type="molecule type" value="Genomic_DNA"/>
</dbReference>
<dbReference type="RefSeq" id="WP_011157673.1">
    <property type="nucleotide sequence ID" value="NZ_CP116810.1"/>
</dbReference>
<dbReference type="SMR" id="Q6N7Y6"/>
<dbReference type="STRING" id="258594.RPA2118"/>
<dbReference type="GeneID" id="66893164"/>
<dbReference type="eggNOG" id="COG4559">
    <property type="taxonomic scope" value="Bacteria"/>
</dbReference>
<dbReference type="HOGENOM" id="CLU_000604_1_11_5"/>
<dbReference type="PhylomeDB" id="Q6N7Y6"/>
<dbReference type="GO" id="GO:0005886">
    <property type="term" value="C:plasma membrane"/>
    <property type="evidence" value="ECO:0007669"/>
    <property type="project" value="UniProtKB-SubCell"/>
</dbReference>
<dbReference type="GO" id="GO:0005524">
    <property type="term" value="F:ATP binding"/>
    <property type="evidence" value="ECO:0007669"/>
    <property type="project" value="UniProtKB-KW"/>
</dbReference>
<dbReference type="GO" id="GO:0016887">
    <property type="term" value="F:ATP hydrolysis activity"/>
    <property type="evidence" value="ECO:0007669"/>
    <property type="project" value="InterPro"/>
</dbReference>
<dbReference type="CDD" id="cd03214">
    <property type="entry name" value="ABC_Iron-Siderophores_B12_Hemin"/>
    <property type="match status" value="1"/>
</dbReference>
<dbReference type="Gene3D" id="3.40.50.300">
    <property type="entry name" value="P-loop containing nucleotide triphosphate hydrolases"/>
    <property type="match status" value="1"/>
</dbReference>
<dbReference type="InterPro" id="IPR003593">
    <property type="entry name" value="AAA+_ATPase"/>
</dbReference>
<dbReference type="InterPro" id="IPR003439">
    <property type="entry name" value="ABC_transporter-like_ATP-bd"/>
</dbReference>
<dbReference type="InterPro" id="IPR027417">
    <property type="entry name" value="P-loop_NTPase"/>
</dbReference>
<dbReference type="NCBIfam" id="NF010068">
    <property type="entry name" value="PRK13548.1"/>
    <property type="match status" value="1"/>
</dbReference>
<dbReference type="PANTHER" id="PTHR42794">
    <property type="entry name" value="HEMIN IMPORT ATP-BINDING PROTEIN HMUV"/>
    <property type="match status" value="1"/>
</dbReference>
<dbReference type="PANTHER" id="PTHR42794:SF1">
    <property type="entry name" value="HEMIN IMPORT ATP-BINDING PROTEIN HMUV"/>
    <property type="match status" value="1"/>
</dbReference>
<dbReference type="Pfam" id="PF00005">
    <property type="entry name" value="ABC_tran"/>
    <property type="match status" value="1"/>
</dbReference>
<dbReference type="SMART" id="SM00382">
    <property type="entry name" value="AAA"/>
    <property type="match status" value="1"/>
</dbReference>
<dbReference type="SUPFAM" id="SSF52540">
    <property type="entry name" value="P-loop containing nucleoside triphosphate hydrolases"/>
    <property type="match status" value="1"/>
</dbReference>
<dbReference type="PROSITE" id="PS50893">
    <property type="entry name" value="ABC_TRANSPORTER_2"/>
    <property type="match status" value="1"/>
</dbReference>
<dbReference type="PROSITE" id="PS51261">
    <property type="entry name" value="HMUV"/>
    <property type="match status" value="1"/>
</dbReference>
<protein>
    <recommendedName>
        <fullName evidence="1">Hemin import ATP-binding protein HmuV</fullName>
        <ecNumber evidence="1">7.6.2.-</ecNumber>
    </recommendedName>
</protein>
<reference key="1">
    <citation type="journal article" date="2004" name="Nat. Biotechnol.">
        <title>Complete genome sequence of the metabolically versatile photosynthetic bacterium Rhodopseudomonas palustris.</title>
        <authorList>
            <person name="Larimer F.W."/>
            <person name="Chain P."/>
            <person name="Hauser L."/>
            <person name="Lamerdin J.E."/>
            <person name="Malfatti S."/>
            <person name="Do L."/>
            <person name="Land M.L."/>
            <person name="Pelletier D.A."/>
            <person name="Beatty J.T."/>
            <person name="Lang A.S."/>
            <person name="Tabita F.R."/>
            <person name="Gibson J.L."/>
            <person name="Hanson T.E."/>
            <person name="Bobst C."/>
            <person name="Torres y Torres J.L."/>
            <person name="Peres C."/>
            <person name="Harrison F.H."/>
            <person name="Gibson J."/>
            <person name="Harwood C.S."/>
        </authorList>
    </citation>
    <scope>NUCLEOTIDE SEQUENCE [LARGE SCALE GENOMIC DNA]</scope>
    <source>
        <strain>ATCC BAA-98 / CGA009</strain>
    </source>
</reference>
<accession>Q6N7Y6</accession>
<keyword id="KW-0067">ATP-binding</keyword>
<keyword id="KW-0997">Cell inner membrane</keyword>
<keyword id="KW-1003">Cell membrane</keyword>
<keyword id="KW-0472">Membrane</keyword>
<keyword id="KW-0547">Nucleotide-binding</keyword>
<keyword id="KW-1278">Translocase</keyword>
<keyword id="KW-0813">Transport</keyword>
<comment type="function">
    <text evidence="1">Part of the ABC transporter complex HmuTUV involved in hemin import. Responsible for energy coupling to the transport system.</text>
</comment>
<comment type="subunit">
    <text evidence="1">The complex is composed of two ATP-binding proteins (HmuV), two transmembrane proteins (HmuU) and a solute-binding protein (HmuT).</text>
</comment>
<comment type="subcellular location">
    <subcellularLocation>
        <location evidence="1">Cell inner membrane</location>
        <topology evidence="1">Peripheral membrane protein</topology>
    </subcellularLocation>
</comment>
<comment type="similarity">
    <text evidence="1">Belongs to the ABC transporter superfamily. Heme (hemin) importer (TC 3.A.1.14.5) family.</text>
</comment>
<name>HMUV_RHOPA</name>